<name>ACNA_PSEAE</name>
<sequence>MPALDSLKTLRSLAVDGKTYHYYSLPEAARTLGDLGKLPMSLKVLLENLLRWEDGSTVTGDDLKALAGWLRERRSDREIQYRPARVLMQDFTGVPAVVDLAAMRAAMAKAGGDPQKINPLSPVDLVIDHSVMVDKFASESAFEQNVEIEMQRNGERYAFLRWGQNAFDNFSVVPPGTGICHQVNLEYLGRTVWTKDEDGRTYAFPDTLVGTDSHTTMINGLGVLGWGVGGIEAEAAMLGQPVSMLIPEVIGFKLTGKLREGITATDLVLTVTQMLRKKGVVGKFVEFYGDGLADLPLADRATIANMAPEYGATCGFFPVDEITLGYLRLSGRPESTVKLVEAYSKEQGLWREKGHEPVFTDTLHLDMGEVEASLAGPKRPQDRVALQNVASAFNEFLGLQLHPSSTEEGRLLSEGGGGTAVGANAAFGEIDYQHDGQTHRLKNGAVVIAAITSCTNTSNPSVMMAAGLLAKKAVEKGLQRKPWVKSSLAPGSKVVTDYFKAAGLTRYLDELGFDLVGYGCTTCIGNSGPLLEPIEKAIQQADLTVASVLSGNRNFEGRVHPLVKTNWLASPPLVVAYALAGSVRINLSEEPLGTGKDGQPVYLKDIWPSQKEIAEAIQKVDTEMFHKEYAEVFAGDEKWQAIQVPQSDTYEWQADSTYIQHPPFFEHIAEAPPAIADVEQARVLAVLGDSVTTDHISPAGNIKADSPAGRYLREHGVEPKDFNSYGSRRGNHEVMMRGTFANIRIKNEMLGGEEGGNTLYVPSGEKLAIYDAAMRYQEDGTPLVIVAGKEYGTGSSRDWAAKGTNLLGVKAVIAESFERIHRSNLVGMGVLPLQFENGQDRKSLKLTGKEVLNIRGLGGELKPHMPLSVEVTREDGSQDSFKVLCRIDTLNEVEYFKAGGILHYVLRSML</sequence>
<feature type="chain" id="PRO_0000287739" description="Aconitate hydratase A">
    <location>
        <begin position="1"/>
        <end position="910"/>
    </location>
</feature>
<feature type="binding site" evidence="2">
    <location>
        <position position="454"/>
    </location>
    <ligand>
        <name>[4Fe-4S] cluster</name>
        <dbReference type="ChEBI" id="CHEBI:49883"/>
    </ligand>
</feature>
<feature type="binding site" evidence="2">
    <location>
        <position position="520"/>
    </location>
    <ligand>
        <name>[4Fe-4S] cluster</name>
        <dbReference type="ChEBI" id="CHEBI:49883"/>
    </ligand>
</feature>
<feature type="binding site" evidence="2">
    <location>
        <position position="523"/>
    </location>
    <ligand>
        <name>[4Fe-4S] cluster</name>
        <dbReference type="ChEBI" id="CHEBI:49883"/>
    </ligand>
</feature>
<protein>
    <recommendedName>
        <fullName evidence="3">Aconitate hydratase A</fullName>
        <shortName evidence="3">ACN</shortName>
        <shortName evidence="3">Aconitase</shortName>
        <ecNumber evidence="3">4.2.1.3</ecNumber>
    </recommendedName>
    <alternativeName>
        <fullName evidence="3">(2R,3S)-2-methylisocitrate dehydratase</fullName>
    </alternativeName>
    <alternativeName>
        <fullName evidence="3">(2S,3R)-3-hydroxybutane-1,2,3-tricarboxylate dehydratase</fullName>
    </alternativeName>
    <alternativeName>
        <fullName evidence="1">Iron-responsive protein-like</fullName>
        <shortName evidence="1">IRP-like</shortName>
    </alternativeName>
    <alternativeName>
        <fullName evidence="3">Probable 2-methyl-cis-aconitate hydratase</fullName>
        <ecNumber evidence="3">4.2.1.99</ecNumber>
    </alternativeName>
    <alternativeName>
        <fullName evidence="1">RNA-binding protein</fullName>
    </alternativeName>
</protein>
<organism>
    <name type="scientific">Pseudomonas aeruginosa (strain ATCC 15692 / DSM 22644 / CIP 104116 / JCM 14847 / LMG 12228 / 1C / PRS 101 / PAO1)</name>
    <dbReference type="NCBI Taxonomy" id="208964"/>
    <lineage>
        <taxon>Bacteria</taxon>
        <taxon>Pseudomonadati</taxon>
        <taxon>Pseudomonadota</taxon>
        <taxon>Gammaproteobacteria</taxon>
        <taxon>Pseudomonadales</taxon>
        <taxon>Pseudomonadaceae</taxon>
        <taxon>Pseudomonas</taxon>
    </lineage>
</organism>
<gene>
    <name type="primary">acnA</name>
    <name type="ordered locus">PA1562</name>
</gene>
<comment type="function">
    <text evidence="1 3">Involved in the catabolism of short chain fatty acids (SCFA) via the tricarboxylic acid (TCA)(acetyl degradation route) and probably the 2-methylcitrate cycle I (propionate degradation route). Catalyzes the reversible isomerization of citrate to isocitrate via cis-aconitate. Could catalyze the hydration of 2-methyl-cis-aconitate to yield (2R,3S)-2-methylisocitrate. The apo form of AcnA functions as a RNA-binding regulatory protein.</text>
</comment>
<comment type="catalytic activity">
    <reaction evidence="3">
        <text>citrate = D-threo-isocitrate</text>
        <dbReference type="Rhea" id="RHEA:10336"/>
        <dbReference type="ChEBI" id="CHEBI:15562"/>
        <dbReference type="ChEBI" id="CHEBI:16947"/>
        <dbReference type="EC" id="4.2.1.3"/>
    </reaction>
</comment>
<comment type="catalytic activity">
    <reaction evidence="3">
        <text>(2S,3R)-3-hydroxybutane-1,2,3-tricarboxylate = 2-methyl-cis-aconitate + H2O</text>
        <dbReference type="Rhea" id="RHEA:17941"/>
        <dbReference type="ChEBI" id="CHEBI:15377"/>
        <dbReference type="ChEBI" id="CHEBI:57429"/>
        <dbReference type="ChEBI" id="CHEBI:57872"/>
        <dbReference type="EC" id="4.2.1.99"/>
    </reaction>
</comment>
<comment type="cofactor">
    <cofactor evidence="1">
        <name>[4Fe-4S] cluster</name>
        <dbReference type="ChEBI" id="CHEBI:49883"/>
    </cofactor>
    <text evidence="1">Binds 1 [4Fe-4S] cluster per subunit.</text>
</comment>
<comment type="pathway">
    <text evidence="3">Carbohydrate metabolism; tricarboxylic acid cycle; isocitrate from oxaloacetate: step 2/2.</text>
</comment>
<comment type="pathway">
    <text evidence="3">Organic acid metabolism; propanoate degradation.</text>
</comment>
<comment type="subunit">
    <text evidence="1">Monomer.</text>
</comment>
<comment type="similarity">
    <text evidence="4">Belongs to the aconitase/IPM isomerase family.</text>
</comment>
<evidence type="ECO:0000250" key="1">
    <source>
        <dbReference type="UniProtKB" id="P09339"/>
    </source>
</evidence>
<evidence type="ECO:0000250" key="2">
    <source>
        <dbReference type="UniProtKB" id="P36683"/>
    </source>
</evidence>
<evidence type="ECO:0000250" key="3">
    <source>
        <dbReference type="UniProtKB" id="Q8ZP52"/>
    </source>
</evidence>
<evidence type="ECO:0000305" key="4"/>
<accession>Q9I3F5</accession>
<keyword id="KW-0004">4Fe-4S</keyword>
<keyword id="KW-0408">Iron</keyword>
<keyword id="KW-0411">Iron-sulfur</keyword>
<keyword id="KW-0456">Lyase</keyword>
<keyword id="KW-0479">Metal-binding</keyword>
<keyword id="KW-1185">Reference proteome</keyword>
<keyword id="KW-0694">RNA-binding</keyword>
<keyword id="KW-0816">Tricarboxylic acid cycle</keyword>
<dbReference type="EC" id="4.2.1.3" evidence="3"/>
<dbReference type="EC" id="4.2.1.99" evidence="3"/>
<dbReference type="EMBL" id="AE004091">
    <property type="protein sequence ID" value="AAG04951.1"/>
    <property type="molecule type" value="Genomic_DNA"/>
</dbReference>
<dbReference type="PIR" id="B83451">
    <property type="entry name" value="B83451"/>
</dbReference>
<dbReference type="RefSeq" id="NP_250253.1">
    <property type="nucleotide sequence ID" value="NC_002516.2"/>
</dbReference>
<dbReference type="RefSeq" id="WP_003105996.1">
    <property type="nucleotide sequence ID" value="NZ_QZGE01000003.1"/>
</dbReference>
<dbReference type="SMR" id="Q9I3F5"/>
<dbReference type="FunCoup" id="Q9I3F5">
    <property type="interactions" value="657"/>
</dbReference>
<dbReference type="STRING" id="208964.PA1562"/>
<dbReference type="PaxDb" id="208964-PA1562"/>
<dbReference type="GeneID" id="879412"/>
<dbReference type="KEGG" id="pae:PA1562"/>
<dbReference type="PATRIC" id="fig|208964.12.peg.1618"/>
<dbReference type="PseudoCAP" id="PA1562"/>
<dbReference type="HOGENOM" id="CLU_013476_2_1_6"/>
<dbReference type="InParanoid" id="Q9I3F5"/>
<dbReference type="OrthoDB" id="9764318at2"/>
<dbReference type="PhylomeDB" id="Q9I3F5"/>
<dbReference type="BioCyc" id="PAER208964:G1FZ6-1591-MONOMER"/>
<dbReference type="UniPathway" id="UPA00223">
    <property type="reaction ID" value="UER00718"/>
</dbReference>
<dbReference type="UniPathway" id="UPA00946"/>
<dbReference type="Proteomes" id="UP000002438">
    <property type="component" value="Chromosome"/>
</dbReference>
<dbReference type="GO" id="GO:0005737">
    <property type="term" value="C:cytoplasm"/>
    <property type="evidence" value="ECO:0000250"/>
    <property type="project" value="PseudoCAP"/>
</dbReference>
<dbReference type="GO" id="GO:0005829">
    <property type="term" value="C:cytosol"/>
    <property type="evidence" value="ECO:0000318"/>
    <property type="project" value="GO_Central"/>
</dbReference>
<dbReference type="GO" id="GO:0047456">
    <property type="term" value="F:2-methylisocitrate dehydratase activity"/>
    <property type="evidence" value="ECO:0000250"/>
    <property type="project" value="UniProtKB"/>
</dbReference>
<dbReference type="GO" id="GO:0051539">
    <property type="term" value="F:4 iron, 4 sulfur cluster binding"/>
    <property type="evidence" value="ECO:0000250"/>
    <property type="project" value="UniProtKB"/>
</dbReference>
<dbReference type="GO" id="GO:0003994">
    <property type="term" value="F:aconitate hydratase activity"/>
    <property type="evidence" value="ECO:0000250"/>
    <property type="project" value="UniProtKB"/>
</dbReference>
<dbReference type="GO" id="GO:0005506">
    <property type="term" value="F:iron ion binding"/>
    <property type="evidence" value="ECO:0000250"/>
    <property type="project" value="PseudoCAP"/>
</dbReference>
<dbReference type="GO" id="GO:0030350">
    <property type="term" value="F:iron-responsive element binding"/>
    <property type="evidence" value="ECO:0000318"/>
    <property type="project" value="GO_Central"/>
</dbReference>
<dbReference type="GO" id="GO:0003730">
    <property type="term" value="F:mRNA 3'-UTR binding"/>
    <property type="evidence" value="ECO:0000250"/>
    <property type="project" value="UniProtKB"/>
</dbReference>
<dbReference type="GO" id="GO:0003729">
    <property type="term" value="F:mRNA binding"/>
    <property type="evidence" value="ECO:0000250"/>
    <property type="project" value="UniProtKB"/>
</dbReference>
<dbReference type="GO" id="GO:0009061">
    <property type="term" value="P:anaerobic respiration"/>
    <property type="evidence" value="ECO:0000250"/>
    <property type="project" value="PseudoCAP"/>
</dbReference>
<dbReference type="GO" id="GO:0019679">
    <property type="term" value="P:propionate metabolic process, methylcitrate cycle"/>
    <property type="evidence" value="ECO:0000250"/>
    <property type="project" value="UniProtKB"/>
</dbReference>
<dbReference type="GO" id="GO:0006979">
    <property type="term" value="P:response to oxidative stress"/>
    <property type="evidence" value="ECO:0000250"/>
    <property type="project" value="PseudoCAP"/>
</dbReference>
<dbReference type="GO" id="GO:0006099">
    <property type="term" value="P:tricarboxylic acid cycle"/>
    <property type="evidence" value="ECO:0000250"/>
    <property type="project" value="UniProtKB"/>
</dbReference>
<dbReference type="CDD" id="cd01586">
    <property type="entry name" value="AcnA_IRP"/>
    <property type="match status" value="1"/>
</dbReference>
<dbReference type="CDD" id="cd01580">
    <property type="entry name" value="AcnA_IRP_Swivel"/>
    <property type="match status" value="1"/>
</dbReference>
<dbReference type="FunFam" id="3.20.19.10:FF:000001">
    <property type="entry name" value="Aconitate hydratase"/>
    <property type="match status" value="1"/>
</dbReference>
<dbReference type="FunFam" id="3.30.499.10:FF:000002">
    <property type="entry name" value="Aconitate hydratase"/>
    <property type="match status" value="1"/>
</dbReference>
<dbReference type="FunFam" id="3.30.499.10:FF:000009">
    <property type="entry name" value="Aconitate hydratase"/>
    <property type="match status" value="1"/>
</dbReference>
<dbReference type="Gene3D" id="6.10.190.10">
    <property type="match status" value="1"/>
</dbReference>
<dbReference type="Gene3D" id="3.30.499.10">
    <property type="entry name" value="Aconitase, domain 3"/>
    <property type="match status" value="2"/>
</dbReference>
<dbReference type="Gene3D" id="3.20.19.10">
    <property type="entry name" value="Aconitase, domain 4"/>
    <property type="match status" value="1"/>
</dbReference>
<dbReference type="InterPro" id="IPR044137">
    <property type="entry name" value="AcnA_IRP_Swivel"/>
</dbReference>
<dbReference type="InterPro" id="IPR015931">
    <property type="entry name" value="Acnase/IPM_dHydase_lsu_aba_1/3"/>
</dbReference>
<dbReference type="InterPro" id="IPR001030">
    <property type="entry name" value="Acoase/IPM_deHydtase_lsu_aba"/>
</dbReference>
<dbReference type="InterPro" id="IPR015928">
    <property type="entry name" value="Aconitase/3IPM_dehydase_swvl"/>
</dbReference>
<dbReference type="InterPro" id="IPR006249">
    <property type="entry name" value="Aconitase/IRP2"/>
</dbReference>
<dbReference type="InterPro" id="IPR018136">
    <property type="entry name" value="Aconitase_4Fe-4S_BS"/>
</dbReference>
<dbReference type="InterPro" id="IPR036008">
    <property type="entry name" value="Aconitase_4Fe-4S_dom"/>
</dbReference>
<dbReference type="InterPro" id="IPR000573">
    <property type="entry name" value="AconitaseA/IPMdHydase_ssu_swvl"/>
</dbReference>
<dbReference type="NCBIfam" id="TIGR01341">
    <property type="entry name" value="aconitase_1"/>
    <property type="match status" value="1"/>
</dbReference>
<dbReference type="NCBIfam" id="NF006757">
    <property type="entry name" value="PRK09277.1"/>
    <property type="match status" value="1"/>
</dbReference>
<dbReference type="NCBIfam" id="NF009520">
    <property type="entry name" value="PRK12881.1"/>
    <property type="match status" value="1"/>
</dbReference>
<dbReference type="PANTHER" id="PTHR11670">
    <property type="entry name" value="ACONITASE/IRON-RESPONSIVE ELEMENT FAMILY MEMBER"/>
    <property type="match status" value="1"/>
</dbReference>
<dbReference type="Pfam" id="PF00330">
    <property type="entry name" value="Aconitase"/>
    <property type="match status" value="1"/>
</dbReference>
<dbReference type="Pfam" id="PF00694">
    <property type="entry name" value="Aconitase_C"/>
    <property type="match status" value="1"/>
</dbReference>
<dbReference type="PRINTS" id="PR00415">
    <property type="entry name" value="ACONITASE"/>
</dbReference>
<dbReference type="SUPFAM" id="SSF53732">
    <property type="entry name" value="Aconitase iron-sulfur domain"/>
    <property type="match status" value="1"/>
</dbReference>
<dbReference type="SUPFAM" id="SSF52016">
    <property type="entry name" value="LeuD/IlvD-like"/>
    <property type="match status" value="1"/>
</dbReference>
<dbReference type="PROSITE" id="PS00450">
    <property type="entry name" value="ACONITASE_1"/>
    <property type="match status" value="1"/>
</dbReference>
<dbReference type="PROSITE" id="PS01244">
    <property type="entry name" value="ACONITASE_2"/>
    <property type="match status" value="1"/>
</dbReference>
<proteinExistence type="inferred from homology"/>
<reference key="1">
    <citation type="journal article" date="2000" name="Nature">
        <title>Complete genome sequence of Pseudomonas aeruginosa PAO1, an opportunistic pathogen.</title>
        <authorList>
            <person name="Stover C.K."/>
            <person name="Pham X.-Q.T."/>
            <person name="Erwin A.L."/>
            <person name="Mizoguchi S.D."/>
            <person name="Warrener P."/>
            <person name="Hickey M.J."/>
            <person name="Brinkman F.S.L."/>
            <person name="Hufnagle W.O."/>
            <person name="Kowalik D.J."/>
            <person name="Lagrou M."/>
            <person name="Garber R.L."/>
            <person name="Goltry L."/>
            <person name="Tolentino E."/>
            <person name="Westbrock-Wadman S."/>
            <person name="Yuan Y."/>
            <person name="Brody L.L."/>
            <person name="Coulter S.N."/>
            <person name="Folger K.R."/>
            <person name="Kas A."/>
            <person name="Larbig K."/>
            <person name="Lim R.M."/>
            <person name="Smith K.A."/>
            <person name="Spencer D.H."/>
            <person name="Wong G.K.-S."/>
            <person name="Wu Z."/>
            <person name="Paulsen I.T."/>
            <person name="Reizer J."/>
            <person name="Saier M.H. Jr."/>
            <person name="Hancock R.E.W."/>
            <person name="Lory S."/>
            <person name="Olson M.V."/>
        </authorList>
    </citation>
    <scope>NUCLEOTIDE SEQUENCE [LARGE SCALE GENOMIC DNA]</scope>
    <source>
        <strain>ATCC 15692 / DSM 22644 / CIP 104116 / JCM 14847 / LMG 12228 / 1C / PRS 101 / PAO1</strain>
    </source>
</reference>